<gene>
    <name type="primary">Tma16</name>
</gene>
<comment type="function">
    <text evidence="1">Involved in the biogenesis of the 60S ribosomal subunit in the nucleus.</text>
</comment>
<comment type="subunit">
    <text evidence="1">Associates with pre-60S ribosomal particles.</text>
</comment>
<comment type="subcellular location">
    <subcellularLocation>
        <location evidence="1">Nucleus</location>
    </subcellularLocation>
</comment>
<comment type="alternative products">
    <event type="alternative splicing"/>
    <isoform>
        <id>Q9CR02-1</id>
        <name>1</name>
        <sequence type="displayed"/>
    </isoform>
    <isoform>
        <id>Q9CR02-2</id>
        <name>2</name>
        <sequence type="described" ref="VSP_031803"/>
    </isoform>
</comment>
<comment type="similarity">
    <text evidence="4">Belongs to the TMA16 family.</text>
</comment>
<dbReference type="EMBL" id="AK007637">
    <property type="protein sequence ID" value="BAB25153.1"/>
    <property type="molecule type" value="mRNA"/>
</dbReference>
<dbReference type="EMBL" id="AK011532">
    <property type="protein sequence ID" value="BAB27681.1"/>
    <property type="molecule type" value="mRNA"/>
</dbReference>
<dbReference type="EMBL" id="BC016246">
    <property type="protein sequence ID" value="AAH16246.1"/>
    <property type="molecule type" value="mRNA"/>
</dbReference>
<dbReference type="EMBL" id="BC034844">
    <property type="protein sequence ID" value="AAH34844.1"/>
    <property type="molecule type" value="mRNA"/>
</dbReference>
<dbReference type="CCDS" id="CCDS40353.1">
    <molecule id="Q9CR02-1"/>
</dbReference>
<dbReference type="RefSeq" id="NP_001344137.1">
    <molecule id="Q9CR02-2"/>
    <property type="nucleotide sequence ID" value="NM_001357208.1"/>
</dbReference>
<dbReference type="RefSeq" id="NP_079741.1">
    <molecule id="Q9CR02-1"/>
    <property type="nucleotide sequence ID" value="NM_025465.3"/>
</dbReference>
<dbReference type="RefSeq" id="XP_006509778.1">
    <property type="nucleotide sequence ID" value="XM_006509715.3"/>
</dbReference>
<dbReference type="SMR" id="Q9CR02"/>
<dbReference type="BioGRID" id="211354">
    <property type="interactions" value="3"/>
</dbReference>
<dbReference type="FunCoup" id="Q9CR02">
    <property type="interactions" value="3122"/>
</dbReference>
<dbReference type="IntAct" id="Q9CR02">
    <property type="interactions" value="1"/>
</dbReference>
<dbReference type="MINT" id="Q9CR02"/>
<dbReference type="STRING" id="10090.ENSMUSP00000026681"/>
<dbReference type="GlyGen" id="Q9CR02">
    <property type="glycosylation" value="1 site"/>
</dbReference>
<dbReference type="iPTMnet" id="Q9CR02"/>
<dbReference type="PhosphoSitePlus" id="Q9CR02"/>
<dbReference type="PaxDb" id="10090-ENSMUSP00000026681"/>
<dbReference type="PeptideAtlas" id="Q9CR02"/>
<dbReference type="ProteomicsDB" id="259418">
    <molecule id="Q9CR02-1"/>
</dbReference>
<dbReference type="ProteomicsDB" id="259419">
    <molecule id="Q9CR02-2"/>
</dbReference>
<dbReference type="Pumba" id="Q9CR02"/>
<dbReference type="Antibodypedia" id="28270">
    <property type="antibodies" value="99 antibodies from 14 providers"/>
</dbReference>
<dbReference type="DNASU" id="66282"/>
<dbReference type="Ensembl" id="ENSMUST00000026681.7">
    <molecule id="Q9CR02-1"/>
    <property type="protein sequence ID" value="ENSMUSP00000026681.6"/>
    <property type="gene ID" value="ENSMUSG00000025591.7"/>
</dbReference>
<dbReference type="GeneID" id="66282"/>
<dbReference type="KEGG" id="mmu:66282"/>
<dbReference type="UCSC" id="uc009lvo.2">
    <molecule id="Q9CR02-1"/>
    <property type="organism name" value="mouse"/>
</dbReference>
<dbReference type="AGR" id="MGI:1913532"/>
<dbReference type="CTD" id="55319"/>
<dbReference type="MGI" id="MGI:1913532">
    <property type="gene designation" value="Tma16"/>
</dbReference>
<dbReference type="VEuPathDB" id="HostDB:ENSMUSG00000025591"/>
<dbReference type="eggNOG" id="ENOG502RXYZ">
    <property type="taxonomic scope" value="Eukaryota"/>
</dbReference>
<dbReference type="GeneTree" id="ENSGT00390000004179"/>
<dbReference type="HOGENOM" id="CLU_105581_1_0_1"/>
<dbReference type="InParanoid" id="Q9CR02"/>
<dbReference type="OMA" id="KEXEKLQ"/>
<dbReference type="OrthoDB" id="270284at2759"/>
<dbReference type="PhylomeDB" id="Q9CR02"/>
<dbReference type="TreeFam" id="TF324892"/>
<dbReference type="BioGRID-ORCS" id="66282">
    <property type="hits" value="25 hits in 78 CRISPR screens"/>
</dbReference>
<dbReference type="ChiTaRS" id="Tma16">
    <property type="organism name" value="mouse"/>
</dbReference>
<dbReference type="PRO" id="PR:Q9CR02"/>
<dbReference type="Proteomes" id="UP000000589">
    <property type="component" value="Chromosome 8"/>
</dbReference>
<dbReference type="RNAct" id="Q9CR02">
    <property type="molecule type" value="protein"/>
</dbReference>
<dbReference type="Bgee" id="ENSMUSG00000025591">
    <property type="expression patterns" value="Expressed in blastoderm cell in morula and 170 other cell types or tissues"/>
</dbReference>
<dbReference type="ExpressionAtlas" id="Q9CR02">
    <property type="expression patterns" value="baseline and differential"/>
</dbReference>
<dbReference type="GO" id="GO:0005730">
    <property type="term" value="C:nucleolus"/>
    <property type="evidence" value="ECO:0007669"/>
    <property type="project" value="Ensembl"/>
</dbReference>
<dbReference type="GO" id="GO:0005654">
    <property type="term" value="C:nucleoplasm"/>
    <property type="evidence" value="ECO:0007669"/>
    <property type="project" value="Ensembl"/>
</dbReference>
<dbReference type="GO" id="GO:1990275">
    <property type="term" value="F:preribosome binding"/>
    <property type="evidence" value="ECO:0000250"/>
    <property type="project" value="UniProtKB"/>
</dbReference>
<dbReference type="GO" id="GO:0042273">
    <property type="term" value="P:ribosomal large subunit biogenesis"/>
    <property type="evidence" value="ECO:0000250"/>
    <property type="project" value="UniProtKB"/>
</dbReference>
<dbReference type="FunFam" id="1.20.1440.170:FF:000001">
    <property type="entry name" value="Translation machinery-associated 16 homolog"/>
    <property type="match status" value="1"/>
</dbReference>
<dbReference type="Gene3D" id="1.20.1440.170">
    <property type="entry name" value="Translation machinery-associated protein 16-like"/>
    <property type="match status" value="1"/>
</dbReference>
<dbReference type="InterPro" id="IPR021346">
    <property type="entry name" value="Tma16"/>
</dbReference>
<dbReference type="InterPro" id="IPR038356">
    <property type="entry name" value="Tma16_sf"/>
</dbReference>
<dbReference type="PANTHER" id="PTHR13349">
    <property type="entry name" value="TRANSLATION MACHINERY-ASSOCIATED PROTEIN 16"/>
    <property type="match status" value="1"/>
</dbReference>
<dbReference type="PANTHER" id="PTHR13349:SF2">
    <property type="entry name" value="TRANSLATION MACHINERY-ASSOCIATED PROTEIN 16"/>
    <property type="match status" value="1"/>
</dbReference>
<dbReference type="Pfam" id="PF11176">
    <property type="entry name" value="Tma16"/>
    <property type="match status" value="1"/>
</dbReference>
<evidence type="ECO:0000250" key="1">
    <source>
        <dbReference type="UniProtKB" id="Q96EY4"/>
    </source>
</evidence>
<evidence type="ECO:0000256" key="2">
    <source>
        <dbReference type="SAM" id="MobiDB-lite"/>
    </source>
</evidence>
<evidence type="ECO:0000303" key="3">
    <source>
    </source>
</evidence>
<evidence type="ECO:0000305" key="4"/>
<sequence>MPKGLKGKMVGREKKVIHPYSRKAAQITRESHKQDKKERLKTEKALRLNLIGDKLQWFHSHLDMKKTRYSKKDACELVERYLDRFSSELEQIELQNSIKDRQGRRHHSREAVIKQTLERERQQYEGYGFEIPDILDSNTLQTFREWDFDLKKLPNIKMRKLCADDAVPKKRKQKNILNIEKDLGELELSGPTGATTDGKLEPASESSDTDEEMTPVPVSPH</sequence>
<reference key="1">
    <citation type="journal article" date="2005" name="Science">
        <title>The transcriptional landscape of the mammalian genome.</title>
        <authorList>
            <person name="Carninci P."/>
            <person name="Kasukawa T."/>
            <person name="Katayama S."/>
            <person name="Gough J."/>
            <person name="Frith M.C."/>
            <person name="Maeda N."/>
            <person name="Oyama R."/>
            <person name="Ravasi T."/>
            <person name="Lenhard B."/>
            <person name="Wells C."/>
            <person name="Kodzius R."/>
            <person name="Shimokawa K."/>
            <person name="Bajic V.B."/>
            <person name="Brenner S.E."/>
            <person name="Batalov S."/>
            <person name="Forrest A.R."/>
            <person name="Zavolan M."/>
            <person name="Davis M.J."/>
            <person name="Wilming L.G."/>
            <person name="Aidinis V."/>
            <person name="Allen J.E."/>
            <person name="Ambesi-Impiombato A."/>
            <person name="Apweiler R."/>
            <person name="Aturaliya R.N."/>
            <person name="Bailey T.L."/>
            <person name="Bansal M."/>
            <person name="Baxter L."/>
            <person name="Beisel K.W."/>
            <person name="Bersano T."/>
            <person name="Bono H."/>
            <person name="Chalk A.M."/>
            <person name="Chiu K.P."/>
            <person name="Choudhary V."/>
            <person name="Christoffels A."/>
            <person name="Clutterbuck D.R."/>
            <person name="Crowe M.L."/>
            <person name="Dalla E."/>
            <person name="Dalrymple B.P."/>
            <person name="de Bono B."/>
            <person name="Della Gatta G."/>
            <person name="di Bernardo D."/>
            <person name="Down T."/>
            <person name="Engstrom P."/>
            <person name="Fagiolini M."/>
            <person name="Faulkner G."/>
            <person name="Fletcher C.F."/>
            <person name="Fukushima T."/>
            <person name="Furuno M."/>
            <person name="Futaki S."/>
            <person name="Gariboldi M."/>
            <person name="Georgii-Hemming P."/>
            <person name="Gingeras T.R."/>
            <person name="Gojobori T."/>
            <person name="Green R.E."/>
            <person name="Gustincich S."/>
            <person name="Harbers M."/>
            <person name="Hayashi Y."/>
            <person name="Hensch T.K."/>
            <person name="Hirokawa N."/>
            <person name="Hill D."/>
            <person name="Huminiecki L."/>
            <person name="Iacono M."/>
            <person name="Ikeo K."/>
            <person name="Iwama A."/>
            <person name="Ishikawa T."/>
            <person name="Jakt M."/>
            <person name="Kanapin A."/>
            <person name="Katoh M."/>
            <person name="Kawasawa Y."/>
            <person name="Kelso J."/>
            <person name="Kitamura H."/>
            <person name="Kitano H."/>
            <person name="Kollias G."/>
            <person name="Krishnan S.P."/>
            <person name="Kruger A."/>
            <person name="Kummerfeld S.K."/>
            <person name="Kurochkin I.V."/>
            <person name="Lareau L.F."/>
            <person name="Lazarevic D."/>
            <person name="Lipovich L."/>
            <person name="Liu J."/>
            <person name="Liuni S."/>
            <person name="McWilliam S."/>
            <person name="Madan Babu M."/>
            <person name="Madera M."/>
            <person name="Marchionni L."/>
            <person name="Matsuda H."/>
            <person name="Matsuzawa S."/>
            <person name="Miki H."/>
            <person name="Mignone F."/>
            <person name="Miyake S."/>
            <person name="Morris K."/>
            <person name="Mottagui-Tabar S."/>
            <person name="Mulder N."/>
            <person name="Nakano N."/>
            <person name="Nakauchi H."/>
            <person name="Ng P."/>
            <person name="Nilsson R."/>
            <person name="Nishiguchi S."/>
            <person name="Nishikawa S."/>
            <person name="Nori F."/>
            <person name="Ohara O."/>
            <person name="Okazaki Y."/>
            <person name="Orlando V."/>
            <person name="Pang K.C."/>
            <person name="Pavan W.J."/>
            <person name="Pavesi G."/>
            <person name="Pesole G."/>
            <person name="Petrovsky N."/>
            <person name="Piazza S."/>
            <person name="Reed J."/>
            <person name="Reid J.F."/>
            <person name="Ring B.Z."/>
            <person name="Ringwald M."/>
            <person name="Rost B."/>
            <person name="Ruan Y."/>
            <person name="Salzberg S.L."/>
            <person name="Sandelin A."/>
            <person name="Schneider C."/>
            <person name="Schoenbach C."/>
            <person name="Sekiguchi K."/>
            <person name="Semple C.A."/>
            <person name="Seno S."/>
            <person name="Sessa L."/>
            <person name="Sheng Y."/>
            <person name="Shibata Y."/>
            <person name="Shimada H."/>
            <person name="Shimada K."/>
            <person name="Silva D."/>
            <person name="Sinclair B."/>
            <person name="Sperling S."/>
            <person name="Stupka E."/>
            <person name="Sugiura K."/>
            <person name="Sultana R."/>
            <person name="Takenaka Y."/>
            <person name="Taki K."/>
            <person name="Tammoja K."/>
            <person name="Tan S.L."/>
            <person name="Tang S."/>
            <person name="Taylor M.S."/>
            <person name="Tegner J."/>
            <person name="Teichmann S.A."/>
            <person name="Ueda H.R."/>
            <person name="van Nimwegen E."/>
            <person name="Verardo R."/>
            <person name="Wei C.L."/>
            <person name="Yagi K."/>
            <person name="Yamanishi H."/>
            <person name="Zabarovsky E."/>
            <person name="Zhu S."/>
            <person name="Zimmer A."/>
            <person name="Hide W."/>
            <person name="Bult C."/>
            <person name="Grimmond S.M."/>
            <person name="Teasdale R.D."/>
            <person name="Liu E.T."/>
            <person name="Brusic V."/>
            <person name="Quackenbush J."/>
            <person name="Wahlestedt C."/>
            <person name="Mattick J.S."/>
            <person name="Hume D.A."/>
            <person name="Kai C."/>
            <person name="Sasaki D."/>
            <person name="Tomaru Y."/>
            <person name="Fukuda S."/>
            <person name="Kanamori-Katayama M."/>
            <person name="Suzuki M."/>
            <person name="Aoki J."/>
            <person name="Arakawa T."/>
            <person name="Iida J."/>
            <person name="Imamura K."/>
            <person name="Itoh M."/>
            <person name="Kato T."/>
            <person name="Kawaji H."/>
            <person name="Kawagashira N."/>
            <person name="Kawashima T."/>
            <person name="Kojima M."/>
            <person name="Kondo S."/>
            <person name="Konno H."/>
            <person name="Nakano K."/>
            <person name="Ninomiya N."/>
            <person name="Nishio T."/>
            <person name="Okada M."/>
            <person name="Plessy C."/>
            <person name="Shibata K."/>
            <person name="Shiraki T."/>
            <person name="Suzuki S."/>
            <person name="Tagami M."/>
            <person name="Waki K."/>
            <person name="Watahiki A."/>
            <person name="Okamura-Oho Y."/>
            <person name="Suzuki H."/>
            <person name="Kawai J."/>
            <person name="Hayashizaki Y."/>
        </authorList>
    </citation>
    <scope>NUCLEOTIDE SEQUENCE [LARGE SCALE MRNA] (ISOFORM 1)</scope>
    <source>
        <strain>C57BL/6J</strain>
        <tissue>Embryo</tissue>
        <tissue>Pancreas</tissue>
    </source>
</reference>
<reference key="2">
    <citation type="journal article" date="2004" name="Genome Res.">
        <title>The status, quality, and expansion of the NIH full-length cDNA project: the Mammalian Gene Collection (MGC).</title>
        <authorList>
            <consortium name="The MGC Project Team"/>
        </authorList>
    </citation>
    <scope>NUCLEOTIDE SEQUENCE [LARGE SCALE MRNA] (ISOFORMS 1 AND 2)</scope>
    <source>
        <tissue>Eye</tissue>
        <tissue>Mammary gland</tissue>
    </source>
</reference>
<reference key="3">
    <citation type="journal article" date="2010" name="Cell">
        <title>A tissue-specific atlas of mouse protein phosphorylation and expression.</title>
        <authorList>
            <person name="Huttlin E.L."/>
            <person name="Jedrychowski M.P."/>
            <person name="Elias J.E."/>
            <person name="Goswami T."/>
            <person name="Rad R."/>
            <person name="Beausoleil S.A."/>
            <person name="Villen J."/>
            <person name="Haas W."/>
            <person name="Sowa M.E."/>
            <person name="Gygi S.P."/>
        </authorList>
    </citation>
    <scope>IDENTIFICATION BY MASS SPECTROMETRY [LARGE SCALE ANALYSIS]</scope>
    <source>
        <tissue>Spleen</tissue>
    </source>
</reference>
<name>TMA16_MOUSE</name>
<feature type="chain" id="PRO_0000321560" description="Translation machinery-associated protein 16">
    <location>
        <begin position="1"/>
        <end position="221"/>
    </location>
</feature>
<feature type="region of interest" description="Disordered" evidence="2">
    <location>
        <begin position="180"/>
        <end position="221"/>
    </location>
</feature>
<feature type="splice variant" id="VSP_031803" description="In isoform 2." evidence="3">
    <location>
        <begin position="1"/>
        <end position="63"/>
    </location>
</feature>
<accession>Q9CR02</accession>
<accession>Q05DD8</accession>
<organism>
    <name type="scientific">Mus musculus</name>
    <name type="common">Mouse</name>
    <dbReference type="NCBI Taxonomy" id="10090"/>
    <lineage>
        <taxon>Eukaryota</taxon>
        <taxon>Metazoa</taxon>
        <taxon>Chordata</taxon>
        <taxon>Craniata</taxon>
        <taxon>Vertebrata</taxon>
        <taxon>Euteleostomi</taxon>
        <taxon>Mammalia</taxon>
        <taxon>Eutheria</taxon>
        <taxon>Euarchontoglires</taxon>
        <taxon>Glires</taxon>
        <taxon>Rodentia</taxon>
        <taxon>Myomorpha</taxon>
        <taxon>Muroidea</taxon>
        <taxon>Muridae</taxon>
        <taxon>Murinae</taxon>
        <taxon>Mus</taxon>
        <taxon>Mus</taxon>
    </lineage>
</organism>
<keyword id="KW-0025">Alternative splicing</keyword>
<keyword id="KW-0539">Nucleus</keyword>
<keyword id="KW-1185">Reference proteome</keyword>
<keyword id="KW-0690">Ribosome biogenesis</keyword>
<proteinExistence type="evidence at protein level"/>
<protein>
    <recommendedName>
        <fullName>Translation machinery-associated protein 16</fullName>
    </recommendedName>
</protein>